<comment type="function">
    <text evidence="1">Together with its co-chaperonin GroES, plays an essential role in assisting protein folding. The GroEL-GroES system forms a nano-cage that allows encapsulation of the non-native substrate proteins and provides a physical environment optimized to promote and accelerate protein folding.</text>
</comment>
<comment type="catalytic activity">
    <reaction evidence="1">
        <text>ATP + H2O + a folded polypeptide = ADP + phosphate + an unfolded polypeptide.</text>
        <dbReference type="EC" id="5.6.1.7"/>
    </reaction>
</comment>
<comment type="subunit">
    <text evidence="1">Forms a cylinder of 14 subunits composed of two heptameric rings stacked back-to-back. Interacts with the co-chaperonin GroES.</text>
</comment>
<comment type="subcellular location">
    <subcellularLocation>
        <location evidence="1">Cytoplasm</location>
    </subcellularLocation>
</comment>
<comment type="similarity">
    <text evidence="1">Belongs to the chaperonin (HSP60) family.</text>
</comment>
<sequence length="548" mass="57469">MAAKDVKFGNDARVKMLRGVNVLADAVKVTLGPKGRNVVLDKSFGAPTITKDGVSVAREIELEDKFENMGAQMVKEVASKANDAAGDGTTTATVLAQSIITEGLKAVAAGMNPMDLKRGIDKAVIAAVEELKKLSVPCSDSKAIAQVGTISANSDETVGKLIAEAMEKVGKEGVITVEEGTGLQDELDVVEGMQFDRGYLSPYFINKPETGSIELESPFILLADKKISNIREMLPVLEAVAKAGKPLLIIAEDVEGEALATLVVNTMRGIVKVAAVKAPGFGDRRKAMLQDIATLTGGTVISEEIGLELEKTTLEDLGTAKRIVINKDTTIIIDGNGEEPAIQGRVSQIRQQIEEATSDYDREKLQERVAKLAGGVAVIKVGAATEVEMKEKKARVEDALHATRAAVEEGVVAGGGVALIRAASKLSELRGVNEDQNVGIKVALRAMESPLRQIVLNCGEEPSVVANTVKAGEGNYGYNAATEEYGDMIAMGILDPTKVTRSALQYAASVAGLMITTECMVTDLPKGDAPDLGGAGGMGGMGGMGGMM</sequence>
<keyword id="KW-0067">ATP-binding</keyword>
<keyword id="KW-0143">Chaperone</keyword>
<keyword id="KW-0963">Cytoplasm</keyword>
<keyword id="KW-0413">Isomerase</keyword>
<keyword id="KW-0547">Nucleotide-binding</keyword>
<evidence type="ECO:0000255" key="1">
    <source>
        <dbReference type="HAMAP-Rule" id="MF_00600"/>
    </source>
</evidence>
<proteinExistence type="inferred from homology"/>
<dbReference type="EC" id="5.6.1.7" evidence="1"/>
<dbReference type="EMBL" id="CP000826">
    <property type="protein sequence ID" value="ABV39517.1"/>
    <property type="molecule type" value="Genomic_DNA"/>
</dbReference>
<dbReference type="SMR" id="A8G8S7"/>
<dbReference type="STRING" id="399741.Spro_0409"/>
<dbReference type="KEGG" id="spe:Spro_0409"/>
<dbReference type="eggNOG" id="COG0459">
    <property type="taxonomic scope" value="Bacteria"/>
</dbReference>
<dbReference type="HOGENOM" id="CLU_016503_3_0_6"/>
<dbReference type="OrthoDB" id="9766614at2"/>
<dbReference type="GO" id="GO:0005737">
    <property type="term" value="C:cytoplasm"/>
    <property type="evidence" value="ECO:0007669"/>
    <property type="project" value="UniProtKB-SubCell"/>
</dbReference>
<dbReference type="GO" id="GO:0005524">
    <property type="term" value="F:ATP binding"/>
    <property type="evidence" value="ECO:0007669"/>
    <property type="project" value="UniProtKB-UniRule"/>
</dbReference>
<dbReference type="GO" id="GO:0140662">
    <property type="term" value="F:ATP-dependent protein folding chaperone"/>
    <property type="evidence" value="ECO:0007669"/>
    <property type="project" value="InterPro"/>
</dbReference>
<dbReference type="GO" id="GO:0016853">
    <property type="term" value="F:isomerase activity"/>
    <property type="evidence" value="ECO:0007669"/>
    <property type="project" value="UniProtKB-KW"/>
</dbReference>
<dbReference type="GO" id="GO:0051082">
    <property type="term" value="F:unfolded protein binding"/>
    <property type="evidence" value="ECO:0007669"/>
    <property type="project" value="UniProtKB-UniRule"/>
</dbReference>
<dbReference type="GO" id="GO:0042026">
    <property type="term" value="P:protein refolding"/>
    <property type="evidence" value="ECO:0007669"/>
    <property type="project" value="UniProtKB-UniRule"/>
</dbReference>
<dbReference type="CDD" id="cd03344">
    <property type="entry name" value="GroEL"/>
    <property type="match status" value="1"/>
</dbReference>
<dbReference type="FunFam" id="1.10.560.10:FF:000001">
    <property type="entry name" value="60 kDa chaperonin"/>
    <property type="match status" value="1"/>
</dbReference>
<dbReference type="FunFam" id="3.50.7.10:FF:000001">
    <property type="entry name" value="60 kDa chaperonin"/>
    <property type="match status" value="1"/>
</dbReference>
<dbReference type="Gene3D" id="3.50.7.10">
    <property type="entry name" value="GroEL"/>
    <property type="match status" value="1"/>
</dbReference>
<dbReference type="Gene3D" id="1.10.560.10">
    <property type="entry name" value="GroEL-like equatorial domain"/>
    <property type="match status" value="1"/>
</dbReference>
<dbReference type="Gene3D" id="3.30.260.10">
    <property type="entry name" value="TCP-1-like chaperonin intermediate domain"/>
    <property type="match status" value="1"/>
</dbReference>
<dbReference type="HAMAP" id="MF_00600">
    <property type="entry name" value="CH60"/>
    <property type="match status" value="1"/>
</dbReference>
<dbReference type="InterPro" id="IPR018370">
    <property type="entry name" value="Chaperonin_Cpn60_CS"/>
</dbReference>
<dbReference type="InterPro" id="IPR001844">
    <property type="entry name" value="Cpn60/GroEL"/>
</dbReference>
<dbReference type="InterPro" id="IPR002423">
    <property type="entry name" value="Cpn60/GroEL/TCP-1"/>
</dbReference>
<dbReference type="InterPro" id="IPR027409">
    <property type="entry name" value="GroEL-like_apical_dom_sf"/>
</dbReference>
<dbReference type="InterPro" id="IPR027413">
    <property type="entry name" value="GROEL-like_equatorial_sf"/>
</dbReference>
<dbReference type="InterPro" id="IPR027410">
    <property type="entry name" value="TCP-1-like_intermed_sf"/>
</dbReference>
<dbReference type="NCBIfam" id="TIGR02348">
    <property type="entry name" value="GroEL"/>
    <property type="match status" value="1"/>
</dbReference>
<dbReference type="NCBIfam" id="NF000592">
    <property type="entry name" value="PRK00013.1"/>
    <property type="match status" value="1"/>
</dbReference>
<dbReference type="NCBIfam" id="NF009487">
    <property type="entry name" value="PRK12849.1"/>
    <property type="match status" value="1"/>
</dbReference>
<dbReference type="NCBIfam" id="NF009488">
    <property type="entry name" value="PRK12850.1"/>
    <property type="match status" value="1"/>
</dbReference>
<dbReference type="NCBIfam" id="NF009489">
    <property type="entry name" value="PRK12851.1"/>
    <property type="match status" value="1"/>
</dbReference>
<dbReference type="PANTHER" id="PTHR45633">
    <property type="entry name" value="60 KDA HEAT SHOCK PROTEIN, MITOCHONDRIAL"/>
    <property type="match status" value="1"/>
</dbReference>
<dbReference type="Pfam" id="PF00118">
    <property type="entry name" value="Cpn60_TCP1"/>
    <property type="match status" value="1"/>
</dbReference>
<dbReference type="PRINTS" id="PR00298">
    <property type="entry name" value="CHAPERONIN60"/>
</dbReference>
<dbReference type="SUPFAM" id="SSF52029">
    <property type="entry name" value="GroEL apical domain-like"/>
    <property type="match status" value="1"/>
</dbReference>
<dbReference type="SUPFAM" id="SSF48592">
    <property type="entry name" value="GroEL equatorial domain-like"/>
    <property type="match status" value="1"/>
</dbReference>
<dbReference type="SUPFAM" id="SSF54849">
    <property type="entry name" value="GroEL-intermediate domain like"/>
    <property type="match status" value="1"/>
</dbReference>
<dbReference type="PROSITE" id="PS00296">
    <property type="entry name" value="CHAPERONINS_CPN60"/>
    <property type="match status" value="1"/>
</dbReference>
<name>CH60_SERP5</name>
<reference key="1">
    <citation type="submission" date="2007-09" db="EMBL/GenBank/DDBJ databases">
        <title>Complete sequence of chromosome of Serratia proteamaculans 568.</title>
        <authorList>
            <consortium name="US DOE Joint Genome Institute"/>
            <person name="Copeland A."/>
            <person name="Lucas S."/>
            <person name="Lapidus A."/>
            <person name="Barry K."/>
            <person name="Glavina del Rio T."/>
            <person name="Dalin E."/>
            <person name="Tice H."/>
            <person name="Pitluck S."/>
            <person name="Chain P."/>
            <person name="Malfatti S."/>
            <person name="Shin M."/>
            <person name="Vergez L."/>
            <person name="Schmutz J."/>
            <person name="Larimer F."/>
            <person name="Land M."/>
            <person name="Hauser L."/>
            <person name="Kyrpides N."/>
            <person name="Kim E."/>
            <person name="Taghavi S."/>
            <person name="Newman L."/>
            <person name="Vangronsveld J."/>
            <person name="van der Lelie D."/>
            <person name="Richardson P."/>
        </authorList>
    </citation>
    <scope>NUCLEOTIDE SEQUENCE [LARGE SCALE GENOMIC DNA]</scope>
    <source>
        <strain>568</strain>
    </source>
</reference>
<organism>
    <name type="scientific">Serratia proteamaculans (strain 568)</name>
    <dbReference type="NCBI Taxonomy" id="399741"/>
    <lineage>
        <taxon>Bacteria</taxon>
        <taxon>Pseudomonadati</taxon>
        <taxon>Pseudomonadota</taxon>
        <taxon>Gammaproteobacteria</taxon>
        <taxon>Enterobacterales</taxon>
        <taxon>Yersiniaceae</taxon>
        <taxon>Serratia</taxon>
    </lineage>
</organism>
<gene>
    <name evidence="1" type="primary">groEL</name>
    <name evidence="1" type="synonym">groL</name>
    <name type="ordered locus">Spro_0409</name>
</gene>
<protein>
    <recommendedName>
        <fullName evidence="1">Chaperonin GroEL</fullName>
        <ecNumber evidence="1">5.6.1.7</ecNumber>
    </recommendedName>
    <alternativeName>
        <fullName evidence="1">60 kDa chaperonin</fullName>
    </alternativeName>
    <alternativeName>
        <fullName evidence="1">Chaperonin-60</fullName>
        <shortName evidence="1">Cpn60</shortName>
    </alternativeName>
</protein>
<accession>A8G8S7</accession>
<feature type="chain" id="PRO_1000061259" description="Chaperonin GroEL">
    <location>
        <begin position="1"/>
        <end position="548"/>
    </location>
</feature>
<feature type="binding site" evidence="1">
    <location>
        <begin position="30"/>
        <end position="33"/>
    </location>
    <ligand>
        <name>ATP</name>
        <dbReference type="ChEBI" id="CHEBI:30616"/>
    </ligand>
</feature>
<feature type="binding site" evidence="1">
    <location>
        <position position="51"/>
    </location>
    <ligand>
        <name>ATP</name>
        <dbReference type="ChEBI" id="CHEBI:30616"/>
    </ligand>
</feature>
<feature type="binding site" evidence="1">
    <location>
        <begin position="87"/>
        <end position="91"/>
    </location>
    <ligand>
        <name>ATP</name>
        <dbReference type="ChEBI" id="CHEBI:30616"/>
    </ligand>
</feature>
<feature type="binding site" evidence="1">
    <location>
        <position position="415"/>
    </location>
    <ligand>
        <name>ATP</name>
        <dbReference type="ChEBI" id="CHEBI:30616"/>
    </ligand>
</feature>
<feature type="binding site" evidence="1">
    <location>
        <begin position="479"/>
        <end position="481"/>
    </location>
    <ligand>
        <name>ATP</name>
        <dbReference type="ChEBI" id="CHEBI:30616"/>
    </ligand>
</feature>
<feature type="binding site" evidence="1">
    <location>
        <position position="495"/>
    </location>
    <ligand>
        <name>ATP</name>
        <dbReference type="ChEBI" id="CHEBI:30616"/>
    </ligand>
</feature>